<protein>
    <recommendedName>
        <fullName>Phosphatase and actin regulator 4</fullName>
    </recommendedName>
</protein>
<evidence type="ECO:0000250" key="1"/>
<evidence type="ECO:0000250" key="2">
    <source>
        <dbReference type="UniProtKB" id="Q501J7"/>
    </source>
</evidence>
<evidence type="ECO:0000256" key="3">
    <source>
        <dbReference type="SAM" id="MobiDB-lite"/>
    </source>
</evidence>
<evidence type="ECO:0000303" key="4">
    <source>
    </source>
</evidence>
<evidence type="ECO:0000303" key="5">
    <source>
    </source>
</evidence>
<evidence type="ECO:0000305" key="6"/>
<evidence type="ECO:0007744" key="7">
    <source>
    </source>
</evidence>
<evidence type="ECO:0007744" key="8">
    <source>
    </source>
</evidence>
<evidence type="ECO:0007744" key="9">
    <source>
    </source>
</evidence>
<evidence type="ECO:0007744" key="10">
    <source>
    </source>
</evidence>
<evidence type="ECO:0007744" key="11">
    <source>
    </source>
</evidence>
<evidence type="ECO:0007744" key="12">
    <source>
    </source>
</evidence>
<organism>
    <name type="scientific">Homo sapiens</name>
    <name type="common">Human</name>
    <dbReference type="NCBI Taxonomy" id="9606"/>
    <lineage>
        <taxon>Eukaryota</taxon>
        <taxon>Metazoa</taxon>
        <taxon>Chordata</taxon>
        <taxon>Craniata</taxon>
        <taxon>Vertebrata</taxon>
        <taxon>Euteleostomi</taxon>
        <taxon>Mammalia</taxon>
        <taxon>Eutheria</taxon>
        <taxon>Euarchontoglires</taxon>
        <taxon>Primates</taxon>
        <taxon>Haplorrhini</taxon>
        <taxon>Catarrhini</taxon>
        <taxon>Hominidae</taxon>
        <taxon>Homo</taxon>
    </lineage>
</organism>
<reference key="1">
    <citation type="journal article" date="2004" name="Nat. Genet.">
        <title>Complete sequencing and characterization of 21,243 full-length human cDNAs.</title>
        <authorList>
            <person name="Ota T."/>
            <person name="Suzuki Y."/>
            <person name="Nishikawa T."/>
            <person name="Otsuki T."/>
            <person name="Sugiyama T."/>
            <person name="Irie R."/>
            <person name="Wakamatsu A."/>
            <person name="Hayashi K."/>
            <person name="Sato H."/>
            <person name="Nagai K."/>
            <person name="Kimura K."/>
            <person name="Makita H."/>
            <person name="Sekine M."/>
            <person name="Obayashi M."/>
            <person name="Nishi T."/>
            <person name="Shibahara T."/>
            <person name="Tanaka T."/>
            <person name="Ishii S."/>
            <person name="Yamamoto J."/>
            <person name="Saito K."/>
            <person name="Kawai Y."/>
            <person name="Isono Y."/>
            <person name="Nakamura Y."/>
            <person name="Nagahari K."/>
            <person name="Murakami K."/>
            <person name="Yasuda T."/>
            <person name="Iwayanagi T."/>
            <person name="Wagatsuma M."/>
            <person name="Shiratori A."/>
            <person name="Sudo H."/>
            <person name="Hosoiri T."/>
            <person name="Kaku Y."/>
            <person name="Kodaira H."/>
            <person name="Kondo H."/>
            <person name="Sugawara M."/>
            <person name="Takahashi M."/>
            <person name="Kanda K."/>
            <person name="Yokoi T."/>
            <person name="Furuya T."/>
            <person name="Kikkawa E."/>
            <person name="Omura Y."/>
            <person name="Abe K."/>
            <person name="Kamihara K."/>
            <person name="Katsuta N."/>
            <person name="Sato K."/>
            <person name="Tanikawa M."/>
            <person name="Yamazaki M."/>
            <person name="Ninomiya K."/>
            <person name="Ishibashi T."/>
            <person name="Yamashita H."/>
            <person name="Murakawa K."/>
            <person name="Fujimori K."/>
            <person name="Tanai H."/>
            <person name="Kimata M."/>
            <person name="Watanabe M."/>
            <person name="Hiraoka S."/>
            <person name="Chiba Y."/>
            <person name="Ishida S."/>
            <person name="Ono Y."/>
            <person name="Takiguchi S."/>
            <person name="Watanabe S."/>
            <person name="Yosida M."/>
            <person name="Hotuta T."/>
            <person name="Kusano J."/>
            <person name="Kanehori K."/>
            <person name="Takahashi-Fujii A."/>
            <person name="Hara H."/>
            <person name="Tanase T.-O."/>
            <person name="Nomura Y."/>
            <person name="Togiya S."/>
            <person name="Komai F."/>
            <person name="Hara R."/>
            <person name="Takeuchi K."/>
            <person name="Arita M."/>
            <person name="Imose N."/>
            <person name="Musashino K."/>
            <person name="Yuuki H."/>
            <person name="Oshima A."/>
            <person name="Sasaki N."/>
            <person name="Aotsuka S."/>
            <person name="Yoshikawa Y."/>
            <person name="Matsunawa H."/>
            <person name="Ichihara T."/>
            <person name="Shiohata N."/>
            <person name="Sano S."/>
            <person name="Moriya S."/>
            <person name="Momiyama H."/>
            <person name="Satoh N."/>
            <person name="Takami S."/>
            <person name="Terashima Y."/>
            <person name="Suzuki O."/>
            <person name="Nakagawa S."/>
            <person name="Senoh A."/>
            <person name="Mizoguchi H."/>
            <person name="Goto Y."/>
            <person name="Shimizu F."/>
            <person name="Wakebe H."/>
            <person name="Hishigaki H."/>
            <person name="Watanabe T."/>
            <person name="Sugiyama A."/>
            <person name="Takemoto M."/>
            <person name="Kawakami B."/>
            <person name="Yamazaki M."/>
            <person name="Watanabe K."/>
            <person name="Kumagai A."/>
            <person name="Itakura S."/>
            <person name="Fukuzumi Y."/>
            <person name="Fujimori Y."/>
            <person name="Komiyama M."/>
            <person name="Tashiro H."/>
            <person name="Tanigami A."/>
            <person name="Fujiwara T."/>
            <person name="Ono T."/>
            <person name="Yamada K."/>
            <person name="Fujii Y."/>
            <person name="Ozaki K."/>
            <person name="Hirao M."/>
            <person name="Ohmori Y."/>
            <person name="Kawabata A."/>
            <person name="Hikiji T."/>
            <person name="Kobatake N."/>
            <person name="Inagaki H."/>
            <person name="Ikema Y."/>
            <person name="Okamoto S."/>
            <person name="Okitani R."/>
            <person name="Kawakami T."/>
            <person name="Noguchi S."/>
            <person name="Itoh T."/>
            <person name="Shigeta K."/>
            <person name="Senba T."/>
            <person name="Matsumura K."/>
            <person name="Nakajima Y."/>
            <person name="Mizuno T."/>
            <person name="Morinaga M."/>
            <person name="Sasaki M."/>
            <person name="Togashi T."/>
            <person name="Oyama M."/>
            <person name="Hata H."/>
            <person name="Watanabe M."/>
            <person name="Komatsu T."/>
            <person name="Mizushima-Sugano J."/>
            <person name="Satoh T."/>
            <person name="Shirai Y."/>
            <person name="Takahashi Y."/>
            <person name="Nakagawa K."/>
            <person name="Okumura K."/>
            <person name="Nagase T."/>
            <person name="Nomura N."/>
            <person name="Kikuchi H."/>
            <person name="Masuho Y."/>
            <person name="Yamashita R."/>
            <person name="Nakai K."/>
            <person name="Yada T."/>
            <person name="Nakamura Y."/>
            <person name="Ohara O."/>
            <person name="Isogai T."/>
            <person name="Sugano S."/>
        </authorList>
    </citation>
    <scope>NUCLEOTIDE SEQUENCE [LARGE SCALE MRNA] (ISOFORM 3)</scope>
    <scope>NUCLEOTIDE SEQUENCE [LARGE SCALE MRNA] OF 271-702 (ISOFORM 1)</scope>
</reference>
<reference key="2">
    <citation type="journal article" date="2007" name="BMC Genomics">
        <title>The full-ORF clone resource of the German cDNA consortium.</title>
        <authorList>
            <person name="Bechtel S."/>
            <person name="Rosenfelder H."/>
            <person name="Duda A."/>
            <person name="Schmidt C.P."/>
            <person name="Ernst U."/>
            <person name="Wellenreuther R."/>
            <person name="Mehrle A."/>
            <person name="Schuster C."/>
            <person name="Bahr A."/>
            <person name="Bloecker H."/>
            <person name="Heubner D."/>
            <person name="Hoerlein A."/>
            <person name="Michel G."/>
            <person name="Wedler H."/>
            <person name="Koehrer K."/>
            <person name="Ottenwaelder B."/>
            <person name="Poustka A."/>
            <person name="Wiemann S."/>
            <person name="Schupp I."/>
        </authorList>
    </citation>
    <scope>NUCLEOTIDE SEQUENCE [LARGE SCALE MRNA] (ISOFORM 1)</scope>
    <source>
        <tissue>Fetal brain</tissue>
    </source>
</reference>
<reference key="3">
    <citation type="journal article" date="2006" name="Nature">
        <title>The DNA sequence and biological annotation of human chromosome 1.</title>
        <authorList>
            <person name="Gregory S.G."/>
            <person name="Barlow K.F."/>
            <person name="McLay K.E."/>
            <person name="Kaul R."/>
            <person name="Swarbreck D."/>
            <person name="Dunham A."/>
            <person name="Scott C.E."/>
            <person name="Howe K.L."/>
            <person name="Woodfine K."/>
            <person name="Spencer C.C.A."/>
            <person name="Jones M.C."/>
            <person name="Gillson C."/>
            <person name="Searle S."/>
            <person name="Zhou Y."/>
            <person name="Kokocinski F."/>
            <person name="McDonald L."/>
            <person name="Evans R."/>
            <person name="Phillips K."/>
            <person name="Atkinson A."/>
            <person name="Cooper R."/>
            <person name="Jones C."/>
            <person name="Hall R.E."/>
            <person name="Andrews T.D."/>
            <person name="Lloyd C."/>
            <person name="Ainscough R."/>
            <person name="Almeida J.P."/>
            <person name="Ambrose K.D."/>
            <person name="Anderson F."/>
            <person name="Andrew R.W."/>
            <person name="Ashwell R.I.S."/>
            <person name="Aubin K."/>
            <person name="Babbage A.K."/>
            <person name="Bagguley C.L."/>
            <person name="Bailey J."/>
            <person name="Beasley H."/>
            <person name="Bethel G."/>
            <person name="Bird C.P."/>
            <person name="Bray-Allen S."/>
            <person name="Brown J.Y."/>
            <person name="Brown A.J."/>
            <person name="Buckley D."/>
            <person name="Burton J."/>
            <person name="Bye J."/>
            <person name="Carder C."/>
            <person name="Chapman J.C."/>
            <person name="Clark S.Y."/>
            <person name="Clarke G."/>
            <person name="Clee C."/>
            <person name="Cobley V."/>
            <person name="Collier R.E."/>
            <person name="Corby N."/>
            <person name="Coville G.J."/>
            <person name="Davies J."/>
            <person name="Deadman R."/>
            <person name="Dunn M."/>
            <person name="Earthrowl M."/>
            <person name="Ellington A.G."/>
            <person name="Errington H."/>
            <person name="Frankish A."/>
            <person name="Frankland J."/>
            <person name="French L."/>
            <person name="Garner P."/>
            <person name="Garnett J."/>
            <person name="Gay L."/>
            <person name="Ghori M.R.J."/>
            <person name="Gibson R."/>
            <person name="Gilby L.M."/>
            <person name="Gillett W."/>
            <person name="Glithero R.J."/>
            <person name="Grafham D.V."/>
            <person name="Griffiths C."/>
            <person name="Griffiths-Jones S."/>
            <person name="Grocock R."/>
            <person name="Hammond S."/>
            <person name="Harrison E.S.I."/>
            <person name="Hart E."/>
            <person name="Haugen E."/>
            <person name="Heath P.D."/>
            <person name="Holmes S."/>
            <person name="Holt K."/>
            <person name="Howden P.J."/>
            <person name="Hunt A.R."/>
            <person name="Hunt S.E."/>
            <person name="Hunter G."/>
            <person name="Isherwood J."/>
            <person name="James R."/>
            <person name="Johnson C."/>
            <person name="Johnson D."/>
            <person name="Joy A."/>
            <person name="Kay M."/>
            <person name="Kershaw J.K."/>
            <person name="Kibukawa M."/>
            <person name="Kimberley A.M."/>
            <person name="King A."/>
            <person name="Knights A.J."/>
            <person name="Lad H."/>
            <person name="Laird G."/>
            <person name="Lawlor S."/>
            <person name="Leongamornlert D.A."/>
            <person name="Lloyd D.M."/>
            <person name="Loveland J."/>
            <person name="Lovell J."/>
            <person name="Lush M.J."/>
            <person name="Lyne R."/>
            <person name="Martin S."/>
            <person name="Mashreghi-Mohammadi M."/>
            <person name="Matthews L."/>
            <person name="Matthews N.S.W."/>
            <person name="McLaren S."/>
            <person name="Milne S."/>
            <person name="Mistry S."/>
            <person name="Moore M.J.F."/>
            <person name="Nickerson T."/>
            <person name="O'Dell C.N."/>
            <person name="Oliver K."/>
            <person name="Palmeiri A."/>
            <person name="Palmer S.A."/>
            <person name="Parker A."/>
            <person name="Patel D."/>
            <person name="Pearce A.V."/>
            <person name="Peck A.I."/>
            <person name="Pelan S."/>
            <person name="Phelps K."/>
            <person name="Phillimore B.J."/>
            <person name="Plumb R."/>
            <person name="Rajan J."/>
            <person name="Raymond C."/>
            <person name="Rouse G."/>
            <person name="Saenphimmachak C."/>
            <person name="Sehra H.K."/>
            <person name="Sheridan E."/>
            <person name="Shownkeen R."/>
            <person name="Sims S."/>
            <person name="Skuce C.D."/>
            <person name="Smith M."/>
            <person name="Steward C."/>
            <person name="Subramanian S."/>
            <person name="Sycamore N."/>
            <person name="Tracey A."/>
            <person name="Tromans A."/>
            <person name="Van Helmond Z."/>
            <person name="Wall M."/>
            <person name="Wallis J.M."/>
            <person name="White S."/>
            <person name="Whitehead S.L."/>
            <person name="Wilkinson J.E."/>
            <person name="Willey D.L."/>
            <person name="Williams H."/>
            <person name="Wilming L."/>
            <person name="Wray P.W."/>
            <person name="Wu Z."/>
            <person name="Coulson A."/>
            <person name="Vaudin M."/>
            <person name="Sulston J.E."/>
            <person name="Durbin R.M."/>
            <person name="Hubbard T."/>
            <person name="Wooster R."/>
            <person name="Dunham I."/>
            <person name="Carter N.P."/>
            <person name="McVean G."/>
            <person name="Ross M.T."/>
            <person name="Harrow J."/>
            <person name="Olson M.V."/>
            <person name="Beck S."/>
            <person name="Rogers J."/>
            <person name="Bentley D.R."/>
        </authorList>
    </citation>
    <scope>NUCLEOTIDE SEQUENCE [LARGE SCALE GENOMIC DNA]</scope>
</reference>
<reference key="4">
    <citation type="submission" date="2005-09" db="EMBL/GenBank/DDBJ databases">
        <authorList>
            <person name="Mural R.J."/>
            <person name="Istrail S."/>
            <person name="Sutton G.G."/>
            <person name="Florea L."/>
            <person name="Halpern A.L."/>
            <person name="Mobarry C.M."/>
            <person name="Lippert R."/>
            <person name="Walenz B."/>
            <person name="Shatkay H."/>
            <person name="Dew I."/>
            <person name="Miller J.R."/>
            <person name="Flanigan M.J."/>
            <person name="Edwards N.J."/>
            <person name="Bolanos R."/>
            <person name="Fasulo D."/>
            <person name="Halldorsson B.V."/>
            <person name="Hannenhalli S."/>
            <person name="Turner R."/>
            <person name="Yooseph S."/>
            <person name="Lu F."/>
            <person name="Nusskern D.R."/>
            <person name="Shue B.C."/>
            <person name="Zheng X.H."/>
            <person name="Zhong F."/>
            <person name="Delcher A.L."/>
            <person name="Huson D.H."/>
            <person name="Kravitz S.A."/>
            <person name="Mouchard L."/>
            <person name="Reinert K."/>
            <person name="Remington K.A."/>
            <person name="Clark A.G."/>
            <person name="Waterman M.S."/>
            <person name="Eichler E.E."/>
            <person name="Adams M.D."/>
            <person name="Hunkapiller M.W."/>
            <person name="Myers E.W."/>
            <person name="Venter J.C."/>
        </authorList>
    </citation>
    <scope>NUCLEOTIDE SEQUENCE [LARGE SCALE GENOMIC DNA]</scope>
</reference>
<reference key="5">
    <citation type="journal article" date="2004" name="Genome Res.">
        <title>The status, quality, and expansion of the NIH full-length cDNA project: the Mammalian Gene Collection (MGC).</title>
        <authorList>
            <consortium name="The MGC Project Team"/>
        </authorList>
    </citation>
    <scope>NUCLEOTIDE SEQUENCE [LARGE SCALE MRNA] (ISOFORMS 1; 2 AND 4)</scope>
    <source>
        <tissue>Adrenal cortex</tissue>
        <tissue>Skin</tissue>
        <tissue>Testis</tissue>
    </source>
</reference>
<reference key="6">
    <citation type="submission" date="1999-02" db="EMBL/GenBank/DDBJ databases">
        <title>Functional prediction of the coding sequences of 75 new genes deduced by analysis of cDNA clones from human fetal liver.</title>
        <authorList>
            <person name="Zhang C."/>
            <person name="Yu Y."/>
            <person name="Zhang S."/>
            <person name="Wei H."/>
            <person name="Bi J."/>
            <person name="Zhou G."/>
            <person name="Dong C."/>
            <person name="Zai Y."/>
            <person name="Xu W."/>
            <person name="Gao F."/>
            <person name="Liu M."/>
            <person name="He F."/>
        </authorList>
    </citation>
    <scope>NUCLEOTIDE SEQUENCE [LARGE SCALE MRNA] OF 365-702 (ISOFORM 1)</scope>
    <source>
        <tissue>Fetal liver</tissue>
    </source>
</reference>
<reference key="7">
    <citation type="journal article" date="2006" name="Cell">
        <title>Global, in vivo, and site-specific phosphorylation dynamics in signaling networks.</title>
        <authorList>
            <person name="Olsen J.V."/>
            <person name="Blagoev B."/>
            <person name="Gnad F."/>
            <person name="Macek B."/>
            <person name="Kumar C."/>
            <person name="Mortensen P."/>
            <person name="Mann M."/>
        </authorList>
    </citation>
    <scope>PHOSPHORYLATION [LARGE SCALE ANALYSIS] AT SER-628</scope>
    <scope>IDENTIFICATION BY MASS SPECTROMETRY [LARGE SCALE ANALYSIS]</scope>
    <source>
        <tissue>Cervix carcinoma</tissue>
    </source>
</reference>
<reference key="8">
    <citation type="journal article" date="2006" name="Nat. Biotechnol.">
        <title>A probability-based approach for high-throughput protein phosphorylation analysis and site localization.</title>
        <authorList>
            <person name="Beausoleil S.A."/>
            <person name="Villen J."/>
            <person name="Gerber S.A."/>
            <person name="Rush J."/>
            <person name="Gygi S.P."/>
        </authorList>
    </citation>
    <scope>IDENTIFICATION BY MASS SPECTROMETRY [LARGE SCALE ANALYSIS]</scope>
    <source>
        <tissue>Cervix carcinoma</tissue>
    </source>
</reference>
<reference key="9">
    <citation type="journal article" date="2008" name="Proc. Natl. Acad. Sci. U.S.A.">
        <title>A quantitative atlas of mitotic phosphorylation.</title>
        <authorList>
            <person name="Dephoure N."/>
            <person name="Zhou C."/>
            <person name="Villen J."/>
            <person name="Beausoleil S.A."/>
            <person name="Bakalarski C.E."/>
            <person name="Elledge S.J."/>
            <person name="Gygi S.P."/>
        </authorList>
    </citation>
    <scope>PHOSPHORYLATION [LARGE SCALE ANALYSIS] AT SER-131; SER-342; SER-344; THR-358; SER-427; THR-432 AND SER-628</scope>
    <scope>IDENTIFICATION BY MASS SPECTROMETRY [LARGE SCALE ANALYSIS]</scope>
    <source>
        <tissue>Cervix carcinoma</tissue>
    </source>
</reference>
<reference key="10">
    <citation type="journal article" date="2009" name="Anal. Chem.">
        <title>Lys-N and trypsin cover complementary parts of the phosphoproteome in a refined SCX-based approach.</title>
        <authorList>
            <person name="Gauci S."/>
            <person name="Helbig A.O."/>
            <person name="Slijper M."/>
            <person name="Krijgsveld J."/>
            <person name="Heck A.J."/>
            <person name="Mohammed S."/>
        </authorList>
    </citation>
    <scope>IDENTIFICATION BY MASS SPECTROMETRY [LARGE SCALE ANALYSIS]</scope>
</reference>
<reference key="11">
    <citation type="journal article" date="2009" name="Sci. Signal.">
        <title>Quantitative phosphoproteomic analysis of T cell receptor signaling reveals system-wide modulation of protein-protein interactions.</title>
        <authorList>
            <person name="Mayya V."/>
            <person name="Lundgren D.H."/>
            <person name="Hwang S.-I."/>
            <person name="Rezaul K."/>
            <person name="Wu L."/>
            <person name="Eng J.K."/>
            <person name="Rodionov V."/>
            <person name="Han D.K."/>
        </authorList>
    </citation>
    <scope>IDENTIFICATION BY MASS SPECTROMETRY [LARGE SCALE ANALYSIS]</scope>
    <source>
        <tissue>Leukemic T-cell</tissue>
    </source>
</reference>
<reference key="12">
    <citation type="journal article" date="2010" name="Sci. Signal.">
        <title>Quantitative phosphoproteomics reveals widespread full phosphorylation site occupancy during mitosis.</title>
        <authorList>
            <person name="Olsen J.V."/>
            <person name="Vermeulen M."/>
            <person name="Santamaria A."/>
            <person name="Kumar C."/>
            <person name="Miller M.L."/>
            <person name="Jensen L.J."/>
            <person name="Gnad F."/>
            <person name="Cox J."/>
            <person name="Jensen T.S."/>
            <person name="Nigg E.A."/>
            <person name="Brunak S."/>
            <person name="Mann M."/>
        </authorList>
    </citation>
    <scope>PHOSPHORYLATION [LARGE SCALE ANALYSIS] AT SER-628</scope>
    <scope>IDENTIFICATION BY MASS SPECTROMETRY [LARGE SCALE ANALYSIS]</scope>
    <source>
        <tissue>Cervix carcinoma</tissue>
    </source>
</reference>
<reference key="13">
    <citation type="journal article" date="2011" name="BMC Syst. Biol.">
        <title>Initial characterization of the human central proteome.</title>
        <authorList>
            <person name="Burkard T.R."/>
            <person name="Planyavsky M."/>
            <person name="Kaupe I."/>
            <person name="Breitwieser F.P."/>
            <person name="Buerckstuemmer T."/>
            <person name="Bennett K.L."/>
            <person name="Superti-Furga G."/>
            <person name="Colinge J."/>
        </authorList>
    </citation>
    <scope>IDENTIFICATION BY MASS SPECTROMETRY [LARGE SCALE ANALYSIS]</scope>
</reference>
<reference key="14">
    <citation type="journal article" date="2011" name="Sci. Signal.">
        <title>System-wide temporal characterization of the proteome and phosphoproteome of human embryonic stem cell differentiation.</title>
        <authorList>
            <person name="Rigbolt K.T."/>
            <person name="Prokhorova T.A."/>
            <person name="Akimov V."/>
            <person name="Henningsen J."/>
            <person name="Johansen P.T."/>
            <person name="Kratchmarova I."/>
            <person name="Kassem M."/>
            <person name="Mann M."/>
            <person name="Olsen J.V."/>
            <person name="Blagoev B."/>
        </authorList>
    </citation>
    <scope>PHOSPHORYLATION [LARGE SCALE ANALYSIS] AT SER-118; SER-464 AND SER-628</scope>
    <scope>IDENTIFICATION BY MASS SPECTROMETRY [LARGE SCALE ANALYSIS]</scope>
</reference>
<reference key="15">
    <citation type="journal article" date="2013" name="J. Proteome Res.">
        <title>Toward a comprehensive characterization of a human cancer cell phosphoproteome.</title>
        <authorList>
            <person name="Zhou H."/>
            <person name="Di Palma S."/>
            <person name="Preisinger C."/>
            <person name="Peng M."/>
            <person name="Polat A.N."/>
            <person name="Heck A.J."/>
            <person name="Mohammed S."/>
        </authorList>
    </citation>
    <scope>PHOSPHORYLATION [LARGE SCALE ANALYSIS] AT SER-118; SER-131; SER-147; SER-291; SER-443; SER-464; SER-590 AND SER-628</scope>
    <scope>IDENTIFICATION BY MASS SPECTROMETRY [LARGE SCALE ANALYSIS]</scope>
    <source>
        <tissue>Cervix carcinoma</tissue>
        <tissue>Erythroleukemia</tissue>
    </source>
</reference>
<reference key="16">
    <citation type="journal article" date="2014" name="J. Proteomics">
        <title>An enzyme assisted RP-RPLC approach for in-depth analysis of human liver phosphoproteome.</title>
        <authorList>
            <person name="Bian Y."/>
            <person name="Song C."/>
            <person name="Cheng K."/>
            <person name="Dong M."/>
            <person name="Wang F."/>
            <person name="Huang J."/>
            <person name="Sun D."/>
            <person name="Wang L."/>
            <person name="Ye M."/>
            <person name="Zou H."/>
        </authorList>
    </citation>
    <scope>PHOSPHORYLATION [LARGE SCALE ANALYSIS] AT SER-557</scope>
    <scope>IDENTIFICATION BY MASS SPECTROMETRY [LARGE SCALE ANALYSIS]</scope>
    <source>
        <tissue>Liver</tissue>
    </source>
</reference>
<gene>
    <name type="primary">PHACTR4</name>
    <name type="ORF">PRO2963</name>
</gene>
<name>PHAR4_HUMAN</name>
<feature type="chain" id="PRO_0000287306" description="Phosphatase and actin regulator 4">
    <location>
        <begin position="1"/>
        <end position="702"/>
    </location>
</feature>
<feature type="repeat" description="RPEL 1">
    <location>
        <begin position="63"/>
        <end position="88"/>
    </location>
</feature>
<feature type="repeat" description="RPEL 2">
    <location>
        <begin position="583"/>
        <end position="608"/>
    </location>
</feature>
<feature type="repeat" description="RPEL 3">
    <location>
        <begin position="621"/>
        <end position="646"/>
    </location>
</feature>
<feature type="region of interest" description="Disordered" evidence="3">
    <location>
        <begin position="1"/>
        <end position="37"/>
    </location>
</feature>
<feature type="region of interest" description="Disordered" evidence="3">
    <location>
        <begin position="72"/>
        <end position="194"/>
    </location>
</feature>
<feature type="region of interest" description="Disordered" evidence="3">
    <location>
        <begin position="222"/>
        <end position="363"/>
    </location>
</feature>
<feature type="region of interest" description="Disordered" evidence="3">
    <location>
        <begin position="469"/>
        <end position="536"/>
    </location>
</feature>
<feature type="region of interest" description="Disordered" evidence="3">
    <location>
        <begin position="592"/>
        <end position="615"/>
    </location>
</feature>
<feature type="compositionally biased region" description="Basic and acidic residues" evidence="3">
    <location>
        <begin position="72"/>
        <end position="84"/>
    </location>
</feature>
<feature type="compositionally biased region" description="Polar residues" evidence="3">
    <location>
        <begin position="106"/>
        <end position="120"/>
    </location>
</feature>
<feature type="compositionally biased region" description="Polar residues" evidence="3">
    <location>
        <begin position="147"/>
        <end position="156"/>
    </location>
</feature>
<feature type="compositionally biased region" description="Pro residues" evidence="3">
    <location>
        <begin position="163"/>
        <end position="173"/>
    </location>
</feature>
<feature type="compositionally biased region" description="Low complexity" evidence="3">
    <location>
        <begin position="233"/>
        <end position="250"/>
    </location>
</feature>
<feature type="compositionally biased region" description="Polar residues" evidence="3">
    <location>
        <begin position="301"/>
        <end position="318"/>
    </location>
</feature>
<feature type="compositionally biased region" description="Pro residues" evidence="3">
    <location>
        <begin position="342"/>
        <end position="362"/>
    </location>
</feature>
<feature type="compositionally biased region" description="Polar residues" evidence="3">
    <location>
        <begin position="484"/>
        <end position="497"/>
    </location>
</feature>
<feature type="compositionally biased region" description="Acidic residues" evidence="3">
    <location>
        <begin position="508"/>
        <end position="518"/>
    </location>
</feature>
<feature type="modified residue" description="Phosphoserine" evidence="2">
    <location>
        <position position="116"/>
    </location>
</feature>
<feature type="modified residue" description="Phosphoserine" evidence="10 11">
    <location>
        <position position="118"/>
    </location>
</feature>
<feature type="modified residue" description="Phosphoserine" evidence="8 11">
    <location>
        <position position="131"/>
    </location>
</feature>
<feature type="modified residue" description="Phosphoserine" evidence="11">
    <location>
        <position position="147"/>
    </location>
</feature>
<feature type="modified residue" description="Phosphoserine" evidence="2">
    <location>
        <position position="270"/>
    </location>
</feature>
<feature type="modified residue" description="Phosphoserine" evidence="11">
    <location>
        <position position="291"/>
    </location>
</feature>
<feature type="modified residue" description="Phosphoserine" evidence="8">
    <location>
        <position position="342"/>
    </location>
</feature>
<feature type="modified residue" description="Phosphoserine" evidence="8">
    <location>
        <position position="344"/>
    </location>
</feature>
<feature type="modified residue" description="Phosphothreonine" evidence="8">
    <location>
        <position position="358"/>
    </location>
</feature>
<feature type="modified residue" description="Phosphoserine" evidence="8">
    <location>
        <position position="427"/>
    </location>
</feature>
<feature type="modified residue" description="Phosphothreonine" evidence="8">
    <location>
        <position position="432"/>
    </location>
</feature>
<feature type="modified residue" description="Phosphoserine" evidence="11">
    <location>
        <position position="443"/>
    </location>
</feature>
<feature type="modified residue" description="Phosphoserine" evidence="2">
    <location>
        <position position="453"/>
    </location>
</feature>
<feature type="modified residue" description="Phosphoserine" evidence="10 11">
    <location>
        <position position="464"/>
    </location>
</feature>
<feature type="modified residue" description="Phosphoserine" evidence="2">
    <location>
        <position position="514"/>
    </location>
</feature>
<feature type="modified residue" description="Phosphoserine" evidence="2">
    <location>
        <position position="516"/>
    </location>
</feature>
<feature type="modified residue" description="Phosphoserine" evidence="12">
    <location>
        <position position="557"/>
    </location>
</feature>
<feature type="modified residue" description="Phosphoserine" evidence="11">
    <location>
        <position position="590"/>
    </location>
</feature>
<feature type="modified residue" description="Phosphoserine" evidence="7 8 9 10 11">
    <location>
        <position position="628"/>
    </location>
</feature>
<feature type="splice variant" id="VSP_025436" description="In isoform 3." evidence="4">
    <location>
        <begin position="1"/>
        <end position="16"/>
    </location>
</feature>
<feature type="splice variant" id="VSP_025437" description="In isoform 2." evidence="5">
    <original>MEDPF</original>
    <variation>MGQADVSRPVNPDAV</variation>
    <location>
        <begin position="1"/>
        <end position="5"/>
    </location>
</feature>
<feature type="splice variant" id="VSP_039730" description="In isoform 4." evidence="5">
    <original>E</original>
    <variation>DFSREPWNSRGSRPAHYRARHGPGQCGSRRHNTSYQKEEQVLRLWQDLQALEMEEKKK</variation>
    <location>
        <position position="6"/>
    </location>
</feature>
<feature type="splice variant" id="VSP_039731" description="In isoform 4." evidence="5">
    <location>
        <begin position="7"/>
        <end position="702"/>
    </location>
</feature>
<feature type="sequence conflict" description="In Ref. 2; CAH18286." evidence="6" ref="2">
    <original>E</original>
    <variation>G</variation>
    <location>
        <position position="183"/>
    </location>
</feature>
<feature type="sequence conflict" description="In Ref. 1; BAB14483." evidence="6" ref="1">
    <original>L</original>
    <variation>P</variation>
    <location>
        <position position="459"/>
    </location>
</feature>
<dbReference type="EMBL" id="AK023233">
    <property type="protein sequence ID" value="BAB14483.1"/>
    <property type="status" value="ALT_INIT"/>
    <property type="molecule type" value="mRNA"/>
</dbReference>
<dbReference type="EMBL" id="AK025436">
    <property type="protein sequence ID" value="BAB15130.1"/>
    <property type="status" value="ALT_FRAME"/>
    <property type="molecule type" value="mRNA"/>
</dbReference>
<dbReference type="EMBL" id="CR749449">
    <property type="protein sequence ID" value="CAH18286.1"/>
    <property type="status" value="ALT_FRAME"/>
    <property type="molecule type" value="mRNA"/>
</dbReference>
<dbReference type="EMBL" id="AL360012">
    <property type="status" value="NOT_ANNOTATED_CDS"/>
    <property type="molecule type" value="Genomic_DNA"/>
</dbReference>
<dbReference type="EMBL" id="AL670471">
    <property type="status" value="NOT_ANNOTATED_CDS"/>
    <property type="molecule type" value="Genomic_DNA"/>
</dbReference>
<dbReference type="EMBL" id="CR391992">
    <property type="status" value="NOT_ANNOTATED_CDS"/>
    <property type="molecule type" value="Genomic_DNA"/>
</dbReference>
<dbReference type="EMBL" id="CR589951">
    <property type="status" value="NOT_ANNOTATED_CDS"/>
    <property type="molecule type" value="Genomic_DNA"/>
</dbReference>
<dbReference type="EMBL" id="CH471059">
    <property type="protein sequence ID" value="EAX07696.1"/>
    <property type="molecule type" value="Genomic_DNA"/>
</dbReference>
<dbReference type="EMBL" id="CH471059">
    <property type="protein sequence ID" value="EAX07698.1"/>
    <property type="molecule type" value="Genomic_DNA"/>
</dbReference>
<dbReference type="EMBL" id="BC021247">
    <property type="protein sequence ID" value="AAH21247.3"/>
    <property type="molecule type" value="mRNA"/>
</dbReference>
<dbReference type="EMBL" id="BC029266">
    <property type="protein sequence ID" value="AAH29266.1"/>
    <property type="molecule type" value="mRNA"/>
</dbReference>
<dbReference type="EMBL" id="BC068508">
    <property type="protein sequence ID" value="AAH68508.1"/>
    <property type="status" value="ALT_SEQ"/>
    <property type="molecule type" value="mRNA"/>
</dbReference>
<dbReference type="EMBL" id="AF130081">
    <property type="protein sequence ID" value="AAG35507.1"/>
    <property type="status" value="ALT_INIT"/>
    <property type="molecule type" value="mRNA"/>
</dbReference>
<dbReference type="CCDS" id="CCDS41293.1">
    <molecule id="Q8IZ21-1"/>
</dbReference>
<dbReference type="CCDS" id="CCDS41294.1">
    <molecule id="Q8IZ21-2"/>
</dbReference>
<dbReference type="RefSeq" id="NP_001041648.1">
    <molecule id="Q8IZ21-1"/>
    <property type="nucleotide sequence ID" value="NM_001048183.3"/>
</dbReference>
<dbReference type="RefSeq" id="NP_001337089.1">
    <molecule id="Q8IZ21-1"/>
    <property type="nucleotide sequence ID" value="NM_001350160.2"/>
</dbReference>
<dbReference type="RefSeq" id="NP_001337090.1">
    <molecule id="Q8IZ21-3"/>
    <property type="nucleotide sequence ID" value="NM_001350161.2"/>
</dbReference>
<dbReference type="RefSeq" id="NP_076412.3">
    <molecule id="Q8IZ21-2"/>
    <property type="nucleotide sequence ID" value="NM_023923.3"/>
</dbReference>
<dbReference type="RefSeq" id="XP_016857657.1">
    <property type="nucleotide sequence ID" value="XM_017002168.1"/>
</dbReference>
<dbReference type="RefSeq" id="XP_016857662.1">
    <property type="nucleotide sequence ID" value="XM_017002173.1"/>
</dbReference>
<dbReference type="SMR" id="Q8IZ21"/>
<dbReference type="BioGRID" id="122429">
    <property type="interactions" value="121"/>
</dbReference>
<dbReference type="DIP" id="DIP-47323N"/>
<dbReference type="FunCoup" id="Q8IZ21">
    <property type="interactions" value="645"/>
</dbReference>
<dbReference type="IntAct" id="Q8IZ21">
    <property type="interactions" value="51"/>
</dbReference>
<dbReference type="MINT" id="Q8IZ21"/>
<dbReference type="STRING" id="9606.ENSP00000362942"/>
<dbReference type="GlyCosmos" id="Q8IZ21">
    <property type="glycosylation" value="5 sites, 1 glycan"/>
</dbReference>
<dbReference type="GlyGen" id="Q8IZ21">
    <property type="glycosylation" value="16 sites, 1 O-linked glycan (15 sites)"/>
</dbReference>
<dbReference type="iPTMnet" id="Q8IZ21"/>
<dbReference type="PhosphoSitePlus" id="Q8IZ21"/>
<dbReference type="BioMuta" id="PHACTR4"/>
<dbReference type="DMDM" id="74728415"/>
<dbReference type="jPOST" id="Q8IZ21"/>
<dbReference type="MassIVE" id="Q8IZ21"/>
<dbReference type="PaxDb" id="9606-ENSP00000362942"/>
<dbReference type="PeptideAtlas" id="Q8IZ21"/>
<dbReference type="ProteomicsDB" id="71271">
    <molecule id="Q8IZ21-1"/>
</dbReference>
<dbReference type="ProteomicsDB" id="71272">
    <molecule id="Q8IZ21-2"/>
</dbReference>
<dbReference type="ProteomicsDB" id="71273">
    <molecule id="Q8IZ21-3"/>
</dbReference>
<dbReference type="ProteomicsDB" id="71274">
    <molecule id="Q8IZ21-4"/>
</dbReference>
<dbReference type="Pumba" id="Q8IZ21"/>
<dbReference type="Antibodypedia" id="30935">
    <property type="antibodies" value="122 antibodies from 27 providers"/>
</dbReference>
<dbReference type="DNASU" id="65979"/>
<dbReference type="Ensembl" id="ENST00000373836.4">
    <molecule id="Q8IZ21-2"/>
    <property type="protein sequence ID" value="ENSP00000362942.3"/>
    <property type="gene ID" value="ENSG00000204138.13"/>
</dbReference>
<dbReference type="Ensembl" id="ENST00000373839.8">
    <molecule id="Q8IZ21-1"/>
    <property type="protein sequence ID" value="ENSP00000362945.3"/>
    <property type="gene ID" value="ENSG00000204138.13"/>
</dbReference>
<dbReference type="Ensembl" id="ENST00000493669.2">
    <molecule id="Q8IZ21-4"/>
    <property type="protein sequence ID" value="ENSP00000488359.1"/>
    <property type="gene ID" value="ENSG00000204138.13"/>
</dbReference>
<dbReference type="GeneID" id="65979"/>
<dbReference type="KEGG" id="hsa:65979"/>
<dbReference type="MANE-Select" id="ENST00000373839.8">
    <property type="protein sequence ID" value="ENSP00000362945.3"/>
    <property type="RefSeq nucleotide sequence ID" value="NM_001048183.3"/>
    <property type="RefSeq protein sequence ID" value="NP_001041648.1"/>
</dbReference>
<dbReference type="UCSC" id="uc001bpw.4">
    <molecule id="Q8IZ21-1"/>
    <property type="organism name" value="human"/>
</dbReference>
<dbReference type="AGR" id="HGNC:25793"/>
<dbReference type="CTD" id="65979"/>
<dbReference type="DisGeNET" id="65979"/>
<dbReference type="GeneCards" id="PHACTR4"/>
<dbReference type="HGNC" id="HGNC:25793">
    <property type="gene designation" value="PHACTR4"/>
</dbReference>
<dbReference type="HPA" id="ENSG00000204138">
    <property type="expression patterns" value="Low tissue specificity"/>
</dbReference>
<dbReference type="MIM" id="608726">
    <property type="type" value="gene"/>
</dbReference>
<dbReference type="neXtProt" id="NX_Q8IZ21"/>
<dbReference type="OpenTargets" id="ENSG00000204138"/>
<dbReference type="PharmGKB" id="PA134959472"/>
<dbReference type="VEuPathDB" id="HostDB:ENSG00000204138"/>
<dbReference type="eggNOG" id="KOG4339">
    <property type="taxonomic scope" value="Eukaryota"/>
</dbReference>
<dbReference type="GeneTree" id="ENSGT00940000157582"/>
<dbReference type="HOGENOM" id="CLU_015753_1_1_1"/>
<dbReference type="InParanoid" id="Q8IZ21"/>
<dbReference type="OMA" id="TMNRSPR"/>
<dbReference type="OrthoDB" id="5563016at2759"/>
<dbReference type="PAN-GO" id="Q8IZ21">
    <property type="GO annotations" value="3 GO annotations based on evolutionary models"/>
</dbReference>
<dbReference type="PhylomeDB" id="Q8IZ21"/>
<dbReference type="TreeFam" id="TF316316"/>
<dbReference type="PathwayCommons" id="Q8IZ21"/>
<dbReference type="SignaLink" id="Q8IZ21"/>
<dbReference type="BioGRID-ORCS" id="65979">
    <property type="hits" value="17 hits in 1156 CRISPR screens"/>
</dbReference>
<dbReference type="ChiTaRS" id="PHACTR4">
    <property type="organism name" value="human"/>
</dbReference>
<dbReference type="GenomeRNAi" id="65979"/>
<dbReference type="Pharos" id="Q8IZ21">
    <property type="development level" value="Tbio"/>
</dbReference>
<dbReference type="PRO" id="PR:Q8IZ21"/>
<dbReference type="Proteomes" id="UP000005640">
    <property type="component" value="Chromosome 1"/>
</dbReference>
<dbReference type="RNAct" id="Q8IZ21">
    <property type="molecule type" value="protein"/>
</dbReference>
<dbReference type="Bgee" id="ENSG00000204138">
    <property type="expression patterns" value="Expressed in pharyngeal mucosa and 196 other cell types or tissues"/>
</dbReference>
<dbReference type="ExpressionAtlas" id="Q8IZ21">
    <property type="expression patterns" value="baseline and differential"/>
</dbReference>
<dbReference type="GO" id="GO:0005737">
    <property type="term" value="C:cytoplasm"/>
    <property type="evidence" value="ECO:0007669"/>
    <property type="project" value="UniProtKB-SubCell"/>
</dbReference>
<dbReference type="GO" id="GO:0030027">
    <property type="term" value="C:lamellipodium"/>
    <property type="evidence" value="ECO:0000250"/>
    <property type="project" value="UniProtKB"/>
</dbReference>
<dbReference type="GO" id="GO:0003779">
    <property type="term" value="F:actin binding"/>
    <property type="evidence" value="ECO:0000250"/>
    <property type="project" value="UniProtKB"/>
</dbReference>
<dbReference type="GO" id="GO:0008157">
    <property type="term" value="F:protein phosphatase 1 binding"/>
    <property type="evidence" value="ECO:0000250"/>
    <property type="project" value="UniProtKB"/>
</dbReference>
<dbReference type="GO" id="GO:0072542">
    <property type="term" value="F:protein phosphatase activator activity"/>
    <property type="evidence" value="ECO:0000250"/>
    <property type="project" value="UniProtKB"/>
</dbReference>
<dbReference type="GO" id="GO:0030036">
    <property type="term" value="P:actin cytoskeleton organization"/>
    <property type="evidence" value="ECO:0000250"/>
    <property type="project" value="UniProtKB"/>
</dbReference>
<dbReference type="GO" id="GO:0061386">
    <property type="term" value="P:closure of optic fissure"/>
    <property type="evidence" value="ECO:0000250"/>
    <property type="project" value="UniProtKB"/>
</dbReference>
<dbReference type="GO" id="GO:0048484">
    <property type="term" value="P:enteric nervous system development"/>
    <property type="evidence" value="ECO:0000250"/>
    <property type="project" value="UniProtKB"/>
</dbReference>
<dbReference type="GO" id="GO:2001045">
    <property type="term" value="P:negative regulation of integrin-mediated signaling pathway"/>
    <property type="evidence" value="ECO:0000250"/>
    <property type="project" value="UniProtKB"/>
</dbReference>
<dbReference type="GO" id="GO:0001755">
    <property type="term" value="P:neural crest cell migration"/>
    <property type="evidence" value="ECO:0000250"/>
    <property type="project" value="UniProtKB"/>
</dbReference>
<dbReference type="GO" id="GO:0001843">
    <property type="term" value="P:neural tube closure"/>
    <property type="evidence" value="ECO:0000250"/>
    <property type="project" value="UniProtKB"/>
</dbReference>
<dbReference type="GO" id="GO:0043085">
    <property type="term" value="P:positive regulation of catalytic activity"/>
    <property type="evidence" value="ECO:0000250"/>
    <property type="project" value="UniProtKB"/>
</dbReference>
<dbReference type="GO" id="GO:0051726">
    <property type="term" value="P:regulation of cell cycle"/>
    <property type="evidence" value="ECO:0000250"/>
    <property type="project" value="UniProtKB"/>
</dbReference>
<dbReference type="GO" id="GO:0007266">
    <property type="term" value="P:Rho protein signal transduction"/>
    <property type="evidence" value="ECO:0000250"/>
    <property type="project" value="UniProtKB"/>
</dbReference>
<dbReference type="Gene3D" id="6.10.140.1750">
    <property type="match status" value="1"/>
</dbReference>
<dbReference type="Gene3D" id="6.10.140.2130">
    <property type="match status" value="1"/>
</dbReference>
<dbReference type="InterPro" id="IPR004018">
    <property type="entry name" value="RPEL_repeat"/>
</dbReference>
<dbReference type="PANTHER" id="PTHR12751:SF4">
    <property type="entry name" value="PHOSPHATASE AND ACTIN REGULATOR 4"/>
    <property type="match status" value="1"/>
</dbReference>
<dbReference type="PANTHER" id="PTHR12751">
    <property type="entry name" value="PHOSPHATASE AND ACTIN REGULATOR PHACTR"/>
    <property type="match status" value="1"/>
</dbReference>
<dbReference type="Pfam" id="PF02755">
    <property type="entry name" value="RPEL"/>
    <property type="match status" value="3"/>
</dbReference>
<dbReference type="SMART" id="SM00707">
    <property type="entry name" value="RPEL"/>
    <property type="match status" value="3"/>
</dbReference>
<dbReference type="PROSITE" id="PS51073">
    <property type="entry name" value="RPEL"/>
    <property type="match status" value="3"/>
</dbReference>
<comment type="function">
    <text evidence="1">Regulator of protein phosphatase 1 (PP1) required for neural tube and optic fissure closure, and enteric neural crest cell (ENCCs) migration during development. Acts as an activator of PP1 by interacting with PPP1CA and preventing phosphorylation of PPP1CA at 'Thr-320'. During neural tube closure, localizes to the ventral neural tube and activates PP1, leading to down-regulate cell proliferation within cranial neural tissue and the neural retina. Also acts as a regulator of migration of enteric neural crest cells (ENCCs) by activating PP1, leading to dephosphorylation and subsequent activation of cofilin (COF1 or COF2) and repression of the integrin signaling through the RHO/ROCK pathway (By similarity).</text>
</comment>
<comment type="subunit">
    <text evidence="1">Binds PPP1CA and actin.</text>
</comment>
<comment type="subcellular location">
    <subcellularLocation>
        <location evidence="1">Cytoplasm</location>
    </subcellularLocation>
    <subcellularLocation>
        <location evidence="1">Cell projection</location>
        <location evidence="1">Lamellipodium</location>
    </subcellularLocation>
</comment>
<comment type="alternative products">
    <event type="alternative splicing"/>
    <isoform>
        <id>Q8IZ21-1</id>
        <name>1</name>
        <sequence type="displayed"/>
    </isoform>
    <isoform>
        <id>Q8IZ21-2</id>
        <name>2</name>
        <sequence type="described" ref="VSP_025437"/>
    </isoform>
    <isoform>
        <id>Q8IZ21-3</id>
        <name>3</name>
        <sequence type="described" ref="VSP_025436"/>
    </isoform>
    <isoform>
        <id>Q8IZ21-4</id>
        <name>4</name>
        <sequence type="described" ref="VSP_039730 VSP_039731"/>
    </isoform>
</comment>
<comment type="miscellaneous">
    <molecule>Isoform 4</molecule>
    <text evidence="6">May be produced at very low levels due to a premature stop codon in the mRNA, leading to nonsense-mediated mRNA decay.</text>
</comment>
<comment type="similarity">
    <text evidence="6">Belongs to the phosphatase and actin regulator family.</text>
</comment>
<comment type="sequence caution" evidence="6">
    <conflict type="erroneous initiation">
        <sequence resource="EMBL-CDS" id="AAG35507"/>
    </conflict>
    <text>Truncated N-terminus.</text>
</comment>
<comment type="sequence caution" evidence="6">
    <conflict type="erroneous translation">
        <sequence resource="EMBL-CDS" id="AAH68508"/>
    </conflict>
    <text>Wrong choice of CDS.</text>
</comment>
<comment type="sequence caution" evidence="6">
    <conflict type="erroneous initiation">
        <sequence resource="EMBL-CDS" id="BAB14483"/>
    </conflict>
    <text>Truncated N-terminus.</text>
</comment>
<comment type="sequence caution" evidence="6">
    <conflict type="frameshift">
        <sequence resource="EMBL-CDS" id="BAB15130"/>
    </conflict>
</comment>
<comment type="sequence caution" evidence="6">
    <conflict type="frameshift">
        <sequence resource="EMBL-CDS" id="CAH18286"/>
    </conflict>
</comment>
<keyword id="KW-0009">Actin-binding</keyword>
<keyword id="KW-0025">Alternative splicing</keyword>
<keyword id="KW-0966">Cell projection</keyword>
<keyword id="KW-0963">Cytoplasm</keyword>
<keyword id="KW-0217">Developmental protein</keyword>
<keyword id="KW-0524">Neurogenesis</keyword>
<keyword id="KW-0597">Phosphoprotein</keyword>
<keyword id="KW-1267">Proteomics identification</keyword>
<keyword id="KW-1185">Reference proteome</keyword>
<keyword id="KW-0677">Repeat</keyword>
<accession>Q8IZ21</accession>
<accession>A2APK6</accession>
<accession>B9ZVW0</accession>
<accession>D3DPM3</accession>
<accession>Q68DD4</accession>
<accession>Q6NUN6</accession>
<accession>Q8N384</accession>
<accession>Q9H395</accession>
<accession>Q9H6X0</accession>
<accession>Q9H8W6</accession>
<sequence>MEDPFEEADQPTTEPGMVLDSVEAGDTTPPTKRKSKFSGFGKIFKPWKWRKKKSSDKFKETSEVLERKISMRKPREELVKRGVLLEDPEQGGEDPGKPSDAMLKNGHTTPIGNARSSSPVQVEEEPVRLASLRKAIPEEDLKKRLGSTGSQPNSEAESVPENVPKPPLLPPKRPLSSSHEASEGQAKDATSSGGTARFIISTSITTAPAATTAATSLAKTVNLSVTPSPAPRTLPAAPASTNTTATPSLTHMVPAKQPPIPPPKPAHRNSNPVIAELSQAINSGTLLSKPSPPLPPKRGIPSTSVPTLESAAAITTKTPSDEREKSTCSMGSELLPMISPRSPSPPLPTHIPPEPPRTPPFPAKTFQVVPEIEFPPSLDLHQEIPQQEDQKKEVPKRILDQNFGEPHIPSRLPPLPLHIRIQQALTSPLPMTPILEGSHRAHSLLFENSDSFSEDSSTLGRTRSLPITIEMLKVPDDEEEEEQTCPSTFSEEMTPTSVIPKLPQCLREEEEKESDSDSEGPIQYRDEEDEDESYQSALANKVKRKDTLAMKLNHRPSEPELNLNSWPCKSKEEWNEIRHQIGNTLIRRLSQRPTPEELEQRNILQPKNEADRQAEKREIKRRLTRKLSQRPTVAELLARKILRFNEYVEVTDAQDYDRRADKPWTKLTPADKAAIRKELNEFKSSEMEVHEESKHFTRYHRP</sequence>
<proteinExistence type="evidence at protein level"/>